<sequence length="308" mass="34973">MGEVKVSPDYNWFRGTVPLKKIIVDDDDSKIWSLYDAGPRSIRCPLIFLPPVSGTADVFFRQILALTGWGYRVIALQYPVYWDHLEFCDGFRKLLDHLQLDKVHLFGASLGGFLAQKFAEYTHKSPRVHSLILCNSFSDTSIFNQTWTANSFWLMPAFMLKKIVLGNFSSGPVDPMMADAIDFMVDRLESLGQSELASRLTLNCQNSYVEPHKIRDIPVTIMDVFDQSALSTEAKEEMYKLYPNARRAHLKTGGNFPYLCRSAEVNLYVQIHLLQFHGTKYAAIDPSMVSAEELEVQKGSLGINQEEQ</sequence>
<dbReference type="EMBL" id="AB169567">
    <property type="protein sequence ID" value="BAE01649.1"/>
    <property type="molecule type" value="mRNA"/>
</dbReference>
<dbReference type="RefSeq" id="NP_001270552.1">
    <property type="nucleotide sequence ID" value="NM_001283623.1"/>
</dbReference>
<dbReference type="SMR" id="Q4R5H6"/>
<dbReference type="STRING" id="9541.ENSMFAP00000036364"/>
<dbReference type="ESTHER" id="macfa-SPG21">
    <property type="family name" value="Maspardin-ACP33-SPG21_like"/>
</dbReference>
<dbReference type="eggNOG" id="ENOG502QPSD">
    <property type="taxonomic scope" value="Eukaryota"/>
</dbReference>
<dbReference type="Proteomes" id="UP000233100">
    <property type="component" value="Unplaced"/>
</dbReference>
<dbReference type="GO" id="GO:0005829">
    <property type="term" value="C:cytosol"/>
    <property type="evidence" value="ECO:0000250"/>
    <property type="project" value="UniProtKB"/>
</dbReference>
<dbReference type="GO" id="GO:0030140">
    <property type="term" value="C:trans-Golgi network transport vesicle"/>
    <property type="evidence" value="ECO:0000250"/>
    <property type="project" value="UniProtKB"/>
</dbReference>
<dbReference type="GO" id="GO:0042609">
    <property type="term" value="F:CD4 receptor binding"/>
    <property type="evidence" value="ECO:0000250"/>
    <property type="project" value="UniProtKB"/>
</dbReference>
<dbReference type="FunFam" id="3.40.50.1820:FF:000040">
    <property type="entry name" value="SPG21, maspardin"/>
    <property type="match status" value="1"/>
</dbReference>
<dbReference type="Gene3D" id="3.40.50.1820">
    <property type="entry name" value="alpha/beta hydrolase"/>
    <property type="match status" value="1"/>
</dbReference>
<dbReference type="InterPro" id="IPR000073">
    <property type="entry name" value="AB_hydrolase_1"/>
</dbReference>
<dbReference type="InterPro" id="IPR029058">
    <property type="entry name" value="AB_hydrolase_fold"/>
</dbReference>
<dbReference type="InterPro" id="IPR026151">
    <property type="entry name" value="Maspardin"/>
</dbReference>
<dbReference type="PANTHER" id="PTHR15913">
    <property type="entry name" value="ACID CLUSTER PROTEIN 33"/>
    <property type="match status" value="1"/>
</dbReference>
<dbReference type="PANTHER" id="PTHR15913:SF0">
    <property type="entry name" value="MASPARDIN"/>
    <property type="match status" value="1"/>
</dbReference>
<dbReference type="Pfam" id="PF00561">
    <property type="entry name" value="Abhydrolase_1"/>
    <property type="match status" value="1"/>
</dbReference>
<dbReference type="SUPFAM" id="SSF53474">
    <property type="entry name" value="alpha/beta-Hydrolases"/>
    <property type="match status" value="1"/>
</dbReference>
<keyword id="KW-0963">Cytoplasm</keyword>
<keyword id="KW-1185">Reference proteome</keyword>
<evidence type="ECO:0000250" key="1"/>
<evidence type="ECO:0000255" key="2"/>
<evidence type="ECO:0000305" key="3"/>
<protein>
    <recommendedName>
        <fullName>Maspardin</fullName>
    </recommendedName>
    <alternativeName>
        <fullName>Spastic paraplegia 21 autosomal recessive Mast syndrome protein homolog</fullName>
    </alternativeName>
</protein>
<accession>Q4R5H6</accession>
<feature type="chain" id="PRO_0000227981" description="Maspardin">
    <location>
        <begin position="1"/>
        <end position="308"/>
    </location>
</feature>
<feature type="domain" description="AB hydrolase-1" evidence="2">
    <location>
        <begin position="87"/>
        <end position="159"/>
    </location>
</feature>
<organism>
    <name type="scientific">Macaca fascicularis</name>
    <name type="common">Crab-eating macaque</name>
    <name type="synonym">Cynomolgus monkey</name>
    <dbReference type="NCBI Taxonomy" id="9541"/>
    <lineage>
        <taxon>Eukaryota</taxon>
        <taxon>Metazoa</taxon>
        <taxon>Chordata</taxon>
        <taxon>Craniata</taxon>
        <taxon>Vertebrata</taxon>
        <taxon>Euteleostomi</taxon>
        <taxon>Mammalia</taxon>
        <taxon>Eutheria</taxon>
        <taxon>Euarchontoglires</taxon>
        <taxon>Primates</taxon>
        <taxon>Haplorrhini</taxon>
        <taxon>Catarrhini</taxon>
        <taxon>Cercopithecidae</taxon>
        <taxon>Cercopithecinae</taxon>
        <taxon>Macaca</taxon>
    </lineage>
</organism>
<name>SPG21_MACFA</name>
<gene>
    <name type="primary">SPG21</name>
    <name type="ORF">QflA-14453</name>
</gene>
<comment type="function">
    <text evidence="1">May play a role as a negative regulatory factor in CD4-dependent T-cell activation.</text>
</comment>
<comment type="subunit">
    <text evidence="1">Interacts with CD4. Interacts with ALDH16A1.</text>
</comment>
<comment type="subcellular location">
    <subcellularLocation>
        <location evidence="1">Cytoplasm</location>
    </subcellularLocation>
</comment>
<comment type="similarity">
    <text evidence="3">Belongs to the AB hydrolase superfamily.</text>
</comment>
<proteinExistence type="evidence at transcript level"/>
<reference key="1">
    <citation type="submission" date="2005-06" db="EMBL/GenBank/DDBJ databases">
        <title>DNA sequences of macaque genes expressed in brain or testis and its evolutionary implications.</title>
        <authorList>
            <consortium name="International consortium for macaque cDNA sequencing and analysis"/>
        </authorList>
    </citation>
    <scope>NUCLEOTIDE SEQUENCE [LARGE SCALE MRNA]</scope>
    <source>
        <tissue>Frontal cortex</tissue>
    </source>
</reference>